<protein>
    <recommendedName>
        <fullName>Putative serine protease K12H4.7</fullName>
        <ecNumber>3.4.-.-</ecNumber>
    </recommendedName>
</protein>
<keyword id="KW-0325">Glycoprotein</keyword>
<keyword id="KW-0378">Hydrolase</keyword>
<keyword id="KW-0645">Protease</keyword>
<keyword id="KW-1185">Reference proteome</keyword>
<keyword id="KW-0720">Serine protease</keyword>
<keyword id="KW-0732">Signal</keyword>
<accession>P34528</accession>
<accession>Q95QC8</accession>
<gene>
    <name type="ORF">K12H4.7</name>
</gene>
<dbReference type="EC" id="3.4.-.-"/>
<dbReference type="EMBL" id="FO081380">
    <property type="protein sequence ID" value="CCD71198.1"/>
    <property type="molecule type" value="Genomic_DNA"/>
</dbReference>
<dbReference type="EMBL" id="FO081380">
    <property type="protein sequence ID" value="CCD71199.1"/>
    <property type="molecule type" value="Genomic_DNA"/>
</dbReference>
<dbReference type="PIR" id="S44851">
    <property type="entry name" value="S44851"/>
</dbReference>
<dbReference type="RefSeq" id="NP_498759.2">
    <property type="nucleotide sequence ID" value="NM_066358.5"/>
</dbReference>
<dbReference type="SMR" id="P34528"/>
<dbReference type="BioGRID" id="41342">
    <property type="interactions" value="15"/>
</dbReference>
<dbReference type="FunCoup" id="P34528">
    <property type="interactions" value="584"/>
</dbReference>
<dbReference type="IntAct" id="P34528">
    <property type="interactions" value="2"/>
</dbReference>
<dbReference type="STRING" id="6239.K12H4.7a.2"/>
<dbReference type="ESTHER" id="caeel-ym67">
    <property type="family name" value="Prolylcarboxypeptidase"/>
</dbReference>
<dbReference type="MEROPS" id="S28.A11"/>
<dbReference type="PaxDb" id="6239-K12H4.7a"/>
<dbReference type="PeptideAtlas" id="P34528"/>
<dbReference type="GeneID" id="176136"/>
<dbReference type="KEGG" id="cel:CELE_K12H4.7"/>
<dbReference type="AGR" id="WB:WBGene00019682"/>
<dbReference type="CTD" id="176136"/>
<dbReference type="WormBase" id="K12H4.7a">
    <property type="protein sequence ID" value="CE32696"/>
    <property type="gene ID" value="WBGene00019682"/>
</dbReference>
<dbReference type="eggNOG" id="KOG2182">
    <property type="taxonomic scope" value="Eukaryota"/>
</dbReference>
<dbReference type="GeneTree" id="ENSGT00940000159838"/>
<dbReference type="HOGENOM" id="CLU_020959_3_1_1"/>
<dbReference type="InParanoid" id="P34528"/>
<dbReference type="OMA" id="TISHAIC"/>
<dbReference type="OrthoDB" id="1735038at2759"/>
<dbReference type="PhylomeDB" id="P34528"/>
<dbReference type="PRO" id="PR:P34528"/>
<dbReference type="Proteomes" id="UP000001940">
    <property type="component" value="Chromosome III"/>
</dbReference>
<dbReference type="Bgee" id="WBGene00019682">
    <property type="expression patterns" value="Expressed in larva and 4 other cell types or tissues"/>
</dbReference>
<dbReference type="GO" id="GO:0008239">
    <property type="term" value="F:dipeptidyl-peptidase activity"/>
    <property type="evidence" value="ECO:0000318"/>
    <property type="project" value="GO_Central"/>
</dbReference>
<dbReference type="GO" id="GO:0070008">
    <property type="term" value="F:serine-type exopeptidase activity"/>
    <property type="evidence" value="ECO:0007669"/>
    <property type="project" value="InterPro"/>
</dbReference>
<dbReference type="GO" id="GO:0045087">
    <property type="term" value="P:innate immune response"/>
    <property type="evidence" value="ECO:0007007"/>
    <property type="project" value="WormBase"/>
</dbReference>
<dbReference type="GO" id="GO:0006508">
    <property type="term" value="P:proteolysis"/>
    <property type="evidence" value="ECO:0007669"/>
    <property type="project" value="UniProtKB-KW"/>
</dbReference>
<dbReference type="Gene3D" id="3.40.50.1820">
    <property type="entry name" value="alpha/beta hydrolase"/>
    <property type="match status" value="1"/>
</dbReference>
<dbReference type="Gene3D" id="1.20.120.980">
    <property type="entry name" value="Serine carboxypeptidase S28, SKS domain"/>
    <property type="match status" value="1"/>
</dbReference>
<dbReference type="InterPro" id="IPR029058">
    <property type="entry name" value="AB_hydrolase_fold"/>
</dbReference>
<dbReference type="InterPro" id="IPR008758">
    <property type="entry name" value="Peptidase_S28"/>
</dbReference>
<dbReference type="InterPro" id="IPR042269">
    <property type="entry name" value="Ser_carbopepase_S28_SKS"/>
</dbReference>
<dbReference type="PANTHER" id="PTHR11010">
    <property type="entry name" value="PROTEASE S28 PRO-X CARBOXYPEPTIDASE-RELATED"/>
    <property type="match status" value="1"/>
</dbReference>
<dbReference type="PANTHER" id="PTHR11010:SF117">
    <property type="entry name" value="SERINE PROTEASE 16"/>
    <property type="match status" value="1"/>
</dbReference>
<dbReference type="Pfam" id="PF05577">
    <property type="entry name" value="Peptidase_S28"/>
    <property type="match status" value="1"/>
</dbReference>
<dbReference type="SUPFAM" id="SSF53474">
    <property type="entry name" value="alpha/beta-Hydrolases"/>
    <property type="match status" value="2"/>
</dbReference>
<reference key="1">
    <citation type="journal article" date="1994" name="Nature">
        <title>2.2 Mb of contiguous nucleotide sequence from chromosome III of C. elegans.</title>
        <authorList>
            <person name="Wilson R."/>
            <person name="Ainscough R."/>
            <person name="Anderson K."/>
            <person name="Baynes C."/>
            <person name="Berks M."/>
            <person name="Bonfield J."/>
            <person name="Burton J."/>
            <person name="Connell M."/>
            <person name="Copsey T."/>
            <person name="Cooper J."/>
            <person name="Coulson A."/>
            <person name="Craxton M."/>
            <person name="Dear S."/>
            <person name="Du Z."/>
            <person name="Durbin R."/>
            <person name="Favello A."/>
            <person name="Fraser A."/>
            <person name="Fulton L."/>
            <person name="Gardner A."/>
            <person name="Green P."/>
            <person name="Hawkins T."/>
            <person name="Hillier L."/>
            <person name="Jier M."/>
            <person name="Johnston L."/>
            <person name="Jones M."/>
            <person name="Kershaw J."/>
            <person name="Kirsten J."/>
            <person name="Laisster N."/>
            <person name="Latreille P."/>
            <person name="Lightning J."/>
            <person name="Lloyd C."/>
            <person name="Mortimore B."/>
            <person name="O'Callaghan M."/>
            <person name="Parsons J."/>
            <person name="Percy C."/>
            <person name="Rifken L."/>
            <person name="Roopra A."/>
            <person name="Saunders D."/>
            <person name="Shownkeen R."/>
            <person name="Sims M."/>
            <person name="Smaldon N."/>
            <person name="Smith A."/>
            <person name="Smith M."/>
            <person name="Sonnhammer E."/>
            <person name="Staden R."/>
            <person name="Sulston J."/>
            <person name="Thierry-Mieg J."/>
            <person name="Thomas K."/>
            <person name="Vaudin M."/>
            <person name="Vaughan K."/>
            <person name="Waterston R."/>
            <person name="Watson A."/>
            <person name="Weinstock L."/>
            <person name="Wilkinson-Sproat J."/>
            <person name="Wohldman P."/>
        </authorList>
    </citation>
    <scope>NUCLEOTIDE SEQUENCE [LARGE SCALE GENOMIC DNA]</scope>
    <source>
        <strain>Bristol N2</strain>
    </source>
</reference>
<reference key="2">
    <citation type="journal article" date="1998" name="Science">
        <title>Genome sequence of the nematode C. elegans: a platform for investigating biology.</title>
        <authorList>
            <consortium name="The C. elegans sequencing consortium"/>
        </authorList>
    </citation>
    <scope>NUCLEOTIDE SEQUENCE [LARGE SCALE GENOMIC DNA]</scope>
    <scope>ALTERNATIVE SPLICING</scope>
    <source>
        <strain>Bristol N2</strain>
    </source>
</reference>
<sequence length="510" mass="56567">MKTLLAVLLAACVLTQVLSAPSNEQRVRRNMIRGRPRGGMKKTPPMSSVSHMINFDNVVSSTFTQTLDHFDSSVGKTFQQRYYHNNQWYKAGGPAFLMLGGEGPESSYWVSYPGLEITNLAAKQGAWVFDIEHRFYGETHPTSDMSVPNLKYLSSAQAIEDAAAFIKAMTAKFPQLANAKWVTFGGSYSGALAAWTRAKHPELVYAAVGSSGPVQAEVDFKEYLEVVQNSITRNSTECAASVTQGFNLVASLLQTSDGRKQLKTAFHLCQDIQMDDKSLKYFWETVYSPYMEVVQYSGDAAGSFATQLTISHAICRYHINTKSTPLQKLKQVNDYFNQVSGYFGCNDIDYNGFISFMKDETFGEAQSDRAWVWQTCTEFGYYQSTSSATAGPWFGGVSNLPAQYYIDECTAIYGAAYNSQEVQTSVDYTNQYYGGRDNLNTDRILLPNGDIDPWHALGKLTSSNSNIVPVVINGTAHCADMYGASSLDSMYLTNARQRISDVLDGWLHAN</sequence>
<evidence type="ECO:0000255" key="1"/>
<evidence type="ECO:0000305" key="2"/>
<feature type="signal peptide" evidence="1">
    <location>
        <begin position="1"/>
        <end position="19"/>
    </location>
</feature>
<feature type="chain" id="PRO_0000027322" description="Putative serine protease K12H4.7">
    <location>
        <begin position="20"/>
        <end position="510"/>
    </location>
</feature>
<feature type="active site" description="Charge relay system" evidence="1">
    <location>
        <position position="187"/>
    </location>
</feature>
<feature type="active site" description="Charge relay system" evidence="1">
    <location>
        <position position="452"/>
    </location>
</feature>
<feature type="active site" description="Charge relay system" evidence="1">
    <location>
        <position position="477"/>
    </location>
</feature>
<feature type="glycosylation site" description="N-linked (GlcNAc...) asparagine" evidence="1">
    <location>
        <position position="234"/>
    </location>
</feature>
<feature type="glycosylation site" description="N-linked (GlcNAc...) asparagine" evidence="1">
    <location>
        <position position="473"/>
    </location>
</feature>
<proteinExistence type="inferred from homology"/>
<organism>
    <name type="scientific">Caenorhabditis elegans</name>
    <dbReference type="NCBI Taxonomy" id="6239"/>
    <lineage>
        <taxon>Eukaryota</taxon>
        <taxon>Metazoa</taxon>
        <taxon>Ecdysozoa</taxon>
        <taxon>Nematoda</taxon>
        <taxon>Chromadorea</taxon>
        <taxon>Rhabditida</taxon>
        <taxon>Rhabditina</taxon>
        <taxon>Rhabditomorpha</taxon>
        <taxon>Rhabditoidea</taxon>
        <taxon>Rhabditidae</taxon>
        <taxon>Peloderinae</taxon>
        <taxon>Caenorhabditis</taxon>
    </lineage>
</organism>
<comment type="similarity">
    <text evidence="2">Belongs to the peptidase S28 family.</text>
</comment>
<name>YM67_CAEEL</name>